<dbReference type="EMBL" id="AJ131213">
    <property type="protein sequence ID" value="CAA10325.1"/>
    <property type="molecule type" value="Genomic_DNA"/>
</dbReference>
<dbReference type="EMBL" id="AL939116">
    <property type="protein sequence ID" value="CAB40858.1"/>
    <property type="molecule type" value="Genomic_DNA"/>
</dbReference>
<dbReference type="PIR" id="T36369">
    <property type="entry name" value="T36369"/>
</dbReference>
<dbReference type="RefSeq" id="NP_627566.1">
    <property type="nucleotide sequence ID" value="NC_003888.3"/>
</dbReference>
<dbReference type="RefSeq" id="WP_003975477.1">
    <property type="nucleotide sequence ID" value="NZ_VNID01000023.1"/>
</dbReference>
<dbReference type="SMR" id="Q9ZEP4"/>
<dbReference type="STRING" id="100226.gene:17760980"/>
<dbReference type="PaxDb" id="100226-SCO3358"/>
<dbReference type="GeneID" id="91385601"/>
<dbReference type="KEGG" id="sco:SCO3358"/>
<dbReference type="PATRIC" id="fig|100226.15.peg.3420"/>
<dbReference type="eggNOG" id="COG0745">
    <property type="taxonomic scope" value="Bacteria"/>
</dbReference>
<dbReference type="HOGENOM" id="CLU_000445_30_4_11"/>
<dbReference type="InParanoid" id="Q9ZEP4"/>
<dbReference type="OrthoDB" id="3197131at2"/>
<dbReference type="PhylomeDB" id="Q9ZEP4"/>
<dbReference type="Proteomes" id="UP000001973">
    <property type="component" value="Chromosome"/>
</dbReference>
<dbReference type="GO" id="GO:0005829">
    <property type="term" value="C:cytosol"/>
    <property type="evidence" value="ECO:0000318"/>
    <property type="project" value="GO_Central"/>
</dbReference>
<dbReference type="GO" id="GO:0032993">
    <property type="term" value="C:protein-DNA complex"/>
    <property type="evidence" value="ECO:0000318"/>
    <property type="project" value="GO_Central"/>
</dbReference>
<dbReference type="GO" id="GO:0000156">
    <property type="term" value="F:phosphorelay response regulator activity"/>
    <property type="evidence" value="ECO:0000318"/>
    <property type="project" value="GO_Central"/>
</dbReference>
<dbReference type="GO" id="GO:0000976">
    <property type="term" value="F:transcription cis-regulatory region binding"/>
    <property type="evidence" value="ECO:0000318"/>
    <property type="project" value="GO_Central"/>
</dbReference>
<dbReference type="GO" id="GO:0006355">
    <property type="term" value="P:regulation of DNA-templated transcription"/>
    <property type="evidence" value="ECO:0000318"/>
    <property type="project" value="GO_Central"/>
</dbReference>
<dbReference type="CDD" id="cd17574">
    <property type="entry name" value="REC_OmpR"/>
    <property type="match status" value="1"/>
</dbReference>
<dbReference type="CDD" id="cd00383">
    <property type="entry name" value="trans_reg_C"/>
    <property type="match status" value="1"/>
</dbReference>
<dbReference type="FunFam" id="1.10.10.10:FF:000018">
    <property type="entry name" value="DNA-binding response regulator ResD"/>
    <property type="match status" value="1"/>
</dbReference>
<dbReference type="FunFam" id="3.40.50.2300:FF:000115">
    <property type="entry name" value="Two-component system response regulator"/>
    <property type="match status" value="1"/>
</dbReference>
<dbReference type="Gene3D" id="3.40.50.2300">
    <property type="match status" value="1"/>
</dbReference>
<dbReference type="Gene3D" id="6.10.250.690">
    <property type="match status" value="1"/>
</dbReference>
<dbReference type="Gene3D" id="1.10.10.10">
    <property type="entry name" value="Winged helix-like DNA-binding domain superfamily/Winged helix DNA-binding domain"/>
    <property type="match status" value="1"/>
</dbReference>
<dbReference type="InterPro" id="IPR011006">
    <property type="entry name" value="CheY-like_superfamily"/>
</dbReference>
<dbReference type="InterPro" id="IPR049766">
    <property type="entry name" value="CseB"/>
</dbReference>
<dbReference type="InterPro" id="IPR001867">
    <property type="entry name" value="OmpR/PhoB-type_DNA-bd"/>
</dbReference>
<dbReference type="InterPro" id="IPR016032">
    <property type="entry name" value="Sig_transdc_resp-reg_C-effctor"/>
</dbReference>
<dbReference type="InterPro" id="IPR001789">
    <property type="entry name" value="Sig_transdc_resp-reg_receiver"/>
</dbReference>
<dbReference type="InterPro" id="IPR039420">
    <property type="entry name" value="WalR-like"/>
</dbReference>
<dbReference type="InterPro" id="IPR036388">
    <property type="entry name" value="WH-like_DNA-bd_sf"/>
</dbReference>
<dbReference type="NCBIfam" id="NF041733">
    <property type="entry name" value="resp_reg_CseB"/>
    <property type="match status" value="1"/>
</dbReference>
<dbReference type="PANTHER" id="PTHR48111:SF21">
    <property type="entry name" value="DNA-BINDING DUAL MASTER TRANSCRIPTIONAL REGULATOR RPAA"/>
    <property type="match status" value="1"/>
</dbReference>
<dbReference type="PANTHER" id="PTHR48111">
    <property type="entry name" value="REGULATOR OF RPOS"/>
    <property type="match status" value="1"/>
</dbReference>
<dbReference type="Pfam" id="PF00072">
    <property type="entry name" value="Response_reg"/>
    <property type="match status" value="1"/>
</dbReference>
<dbReference type="Pfam" id="PF00486">
    <property type="entry name" value="Trans_reg_C"/>
    <property type="match status" value="1"/>
</dbReference>
<dbReference type="SMART" id="SM00448">
    <property type="entry name" value="REC"/>
    <property type="match status" value="1"/>
</dbReference>
<dbReference type="SMART" id="SM00862">
    <property type="entry name" value="Trans_reg_C"/>
    <property type="match status" value="1"/>
</dbReference>
<dbReference type="SUPFAM" id="SSF46894">
    <property type="entry name" value="C-terminal effector domain of the bipartite response regulators"/>
    <property type="match status" value="1"/>
</dbReference>
<dbReference type="SUPFAM" id="SSF52172">
    <property type="entry name" value="CheY-like"/>
    <property type="match status" value="1"/>
</dbReference>
<dbReference type="PROSITE" id="PS51755">
    <property type="entry name" value="OMPR_PHOB"/>
    <property type="match status" value="1"/>
</dbReference>
<dbReference type="PROSITE" id="PS50110">
    <property type="entry name" value="RESPONSE_REGULATORY"/>
    <property type="match status" value="1"/>
</dbReference>
<proteinExistence type="evidence at protein level"/>
<gene>
    <name type="primary">cseB</name>
    <name type="ordered locus">SCO3358</name>
    <name type="ORF">SCE94.09</name>
</gene>
<reference key="1">
    <citation type="journal article" date="1999" name="Mol. Microbiol.">
        <title>A putative two-component signal transduction system regulates sigE, a sigma factor required for normal cell wall integrity in Streptomyces coelicolor A3(2).</title>
        <authorList>
            <person name="Paget M.S.B."/>
            <person name="Leibowitz E."/>
            <person name="Buttner M.J."/>
        </authorList>
    </citation>
    <scope>NUCLEOTIDE SEQUENCE [GENOMIC DNA]</scope>
    <scope>FUNCTION IN TRANSCRIPTIONAL ACTIVATION OF SIGMA E</scope>
    <source>
        <strain>A3(2) / M600</strain>
    </source>
</reference>
<reference key="2">
    <citation type="journal article" date="2002" name="Nature">
        <title>Complete genome sequence of the model actinomycete Streptomyces coelicolor A3(2).</title>
        <authorList>
            <person name="Bentley S.D."/>
            <person name="Chater K.F."/>
            <person name="Cerdeno-Tarraga A.-M."/>
            <person name="Challis G.L."/>
            <person name="Thomson N.R."/>
            <person name="James K.D."/>
            <person name="Harris D.E."/>
            <person name="Quail M.A."/>
            <person name="Kieser H."/>
            <person name="Harper D."/>
            <person name="Bateman A."/>
            <person name="Brown S."/>
            <person name="Chandra G."/>
            <person name="Chen C.W."/>
            <person name="Collins M."/>
            <person name="Cronin A."/>
            <person name="Fraser A."/>
            <person name="Goble A."/>
            <person name="Hidalgo J."/>
            <person name="Hornsby T."/>
            <person name="Howarth S."/>
            <person name="Huang C.-H."/>
            <person name="Kieser T."/>
            <person name="Larke L."/>
            <person name="Murphy L.D."/>
            <person name="Oliver K."/>
            <person name="O'Neil S."/>
            <person name="Rabbinowitsch E."/>
            <person name="Rajandream M.A."/>
            <person name="Rutherford K.M."/>
            <person name="Rutter S."/>
            <person name="Seeger K."/>
            <person name="Saunders D."/>
            <person name="Sharp S."/>
            <person name="Squares R."/>
            <person name="Squares S."/>
            <person name="Taylor K."/>
            <person name="Warren T."/>
            <person name="Wietzorrek A."/>
            <person name="Woodward J.R."/>
            <person name="Barrell B.G."/>
            <person name="Parkhill J."/>
            <person name="Hopwood D.A."/>
        </authorList>
    </citation>
    <scope>NUCLEOTIDE SEQUENCE [LARGE SCALE GENOMIC DNA]</scope>
    <source>
        <strain>ATCC BAA-471 / A3(2) / M145</strain>
    </source>
</reference>
<evidence type="ECO:0000255" key="1">
    <source>
        <dbReference type="PROSITE-ProRule" id="PRU00169"/>
    </source>
</evidence>
<evidence type="ECO:0000255" key="2">
    <source>
        <dbReference type="PROSITE-ProRule" id="PRU01091"/>
    </source>
</evidence>
<evidence type="ECO:0000269" key="3">
    <source>
    </source>
</evidence>
<evidence type="ECO:0000305" key="4"/>
<comment type="function">
    <text evidence="3">Member of the two-component regulatory system CseB/CseC involved in the stability of the cell envelope. CseB activates transcription of RNA polymerase sigma-E factor, in response to changes in the cell envelope.</text>
</comment>
<comment type="subcellular location">
    <subcellularLocation>
        <location evidence="4">Cytoplasm</location>
    </subcellularLocation>
</comment>
<comment type="PTM">
    <text evidence="4">Phosphorylated by CseC.</text>
</comment>
<accession>Q9ZEP4</accession>
<keyword id="KW-0963">Cytoplasm</keyword>
<keyword id="KW-0238">DNA-binding</keyword>
<keyword id="KW-0597">Phosphoprotein</keyword>
<keyword id="KW-1185">Reference proteome</keyword>
<keyword id="KW-0804">Transcription</keyword>
<keyword id="KW-0805">Transcription regulation</keyword>
<keyword id="KW-0902">Two-component regulatory system</keyword>
<name>CSEB_STRCO</name>
<feature type="chain" id="PRO_0000314481" description="Transcriptional regulatory protein CseB">
    <location>
        <begin position="1"/>
        <end position="234"/>
    </location>
</feature>
<feature type="domain" description="Response regulatory" evidence="1">
    <location>
        <begin position="6"/>
        <end position="119"/>
    </location>
</feature>
<feature type="DNA-binding region" description="OmpR/PhoB-type" evidence="2">
    <location>
        <begin position="140"/>
        <end position="234"/>
    </location>
</feature>
<feature type="modified residue" description="4-aspartylphosphate" evidence="1">
    <location>
        <position position="55"/>
    </location>
</feature>
<sequence>MADQTHVLFVEDDDVIREATQLALERDGFAVTAMPDGLSGLESFRADRPDIALLDVMLPGLDGVSLCRRIRDESTVPVIMLSARADSIDVVLGLEAGADDYVTKPFDGAVLVARIRAVLRRFGHAGGGDRTEGAGAAETGGVLTFGDLEVDTDGMEVRRAGRPVGLTPTEMRLLLEFSSAPGTVLSRDKLLERVWDYGWGGDTRVVDVHVQRLRTKIGQDRIETVRGFGYKLKA</sequence>
<protein>
    <recommendedName>
        <fullName>Transcriptional regulatory protein CseB</fullName>
    </recommendedName>
</protein>
<organism>
    <name type="scientific">Streptomyces coelicolor (strain ATCC BAA-471 / A3(2) / M145)</name>
    <dbReference type="NCBI Taxonomy" id="100226"/>
    <lineage>
        <taxon>Bacteria</taxon>
        <taxon>Bacillati</taxon>
        <taxon>Actinomycetota</taxon>
        <taxon>Actinomycetes</taxon>
        <taxon>Kitasatosporales</taxon>
        <taxon>Streptomycetaceae</taxon>
        <taxon>Streptomyces</taxon>
        <taxon>Streptomyces albidoflavus group</taxon>
    </lineage>
</organism>